<proteinExistence type="inferred from homology"/>
<comment type="function">
    <text evidence="1">Part of the ABC transporter complex MalEFGK involved in maltose/maltodextrin import. Probably responsible for the translocation of the substrate across the membrane.</text>
</comment>
<comment type="subunit">
    <text evidence="1">The complex is composed of two ATP-binding proteins (MalK), two transmembrane proteins (MalG and MalF) and a solute-binding protein (MalE).</text>
</comment>
<comment type="subcellular location">
    <subcellularLocation>
        <location evidence="1">Cell inner membrane</location>
        <topology evidence="1">Multi-pass membrane protein</topology>
    </subcellularLocation>
</comment>
<comment type="similarity">
    <text evidence="4">Belongs to the binding-protein-dependent transport system permease family. MalFG subfamily.</text>
</comment>
<name>MALF_VIBVU</name>
<keyword id="KW-0997">Cell inner membrane</keyword>
<keyword id="KW-1003">Cell membrane</keyword>
<keyword id="KW-0472">Membrane</keyword>
<keyword id="KW-0762">Sugar transport</keyword>
<keyword id="KW-0812">Transmembrane</keyword>
<keyword id="KW-1133">Transmembrane helix</keyword>
<keyword id="KW-0813">Transport</keyword>
<accession>Q8D3U8</accession>
<protein>
    <recommendedName>
        <fullName evidence="1">Maltose/maltodextrin transport system permease protein MalF</fullName>
    </recommendedName>
</protein>
<sequence length="523" mass="57107">MQSVQGTDAMTAPAASLPGSKKVFIKWALLGTVGLINGYATILMYSRGEVAFAMLTVILTALALYVFGSKKTYAHRYIYPGIAGMILFILFPLAYTVGLAFTNYSAKNQLSLDRAQSVLLDRTFQSGESYPFTLYKTDSGHRIVIKDGDVLLSTPEFVLGSAISDLDLSPVDTVSGTAEPIKTIVSNRTALSSIDLHFANGDDIRMSGLRKFAGVVPLYTMQADGETLKNNQTGELLKPNMDVGFYQAMDEAGNFVGNTVSPGFVVQIGTDNFERVWKDDGIKEPFISIFIWTVVFSILTVLLTLMIGLVLASVVQWEELKGRAIYRVLLILPYAVPAFISILIFKGLFNQSFGEINMVLNALFGISPSWFSDPIMAKSMVLIVNTWLGFPYMMILCMGLLKAIPEDLYEASAIDGANFVQNFTRVTLPLMIKPLTPLLIASFAFNFNNFVMIQLLTQGGPNMIGTSEPAGYTDLLVSYTYRIAFEGGGGQDFGLASAIATLIFLLVGALALLNLRFTKLSQN</sequence>
<feature type="chain" id="PRO_0000060078" description="Maltose/maltodextrin transport system permease protein MalF">
    <location>
        <begin position="1"/>
        <end position="523"/>
    </location>
</feature>
<feature type="topological domain" description="Cytoplasmic" evidence="2">
    <location>
        <begin position="1"/>
        <end position="22"/>
    </location>
</feature>
<feature type="transmembrane region" description="Helical" evidence="3">
    <location>
        <begin position="23"/>
        <end position="45"/>
    </location>
</feature>
<feature type="topological domain" description="Periplasmic" evidence="2">
    <location>
        <begin position="46"/>
        <end position="49"/>
    </location>
</feature>
<feature type="transmembrane region" description="Helical" evidence="3">
    <location>
        <begin position="50"/>
        <end position="69"/>
    </location>
</feature>
<feature type="topological domain" description="Cytoplasmic" evidence="2">
    <location>
        <begin position="70"/>
        <end position="81"/>
    </location>
</feature>
<feature type="transmembrane region" description="Helical" evidence="3">
    <location>
        <begin position="82"/>
        <end position="104"/>
    </location>
</feature>
<feature type="topological domain" description="Periplasmic" evidence="2">
    <location>
        <begin position="105"/>
        <end position="288"/>
    </location>
</feature>
<feature type="transmembrane region" description="Helical" evidence="3">
    <location>
        <begin position="289"/>
        <end position="311"/>
    </location>
</feature>
<feature type="topological domain" description="Cytoplasmic" evidence="2">
    <location>
        <begin position="312"/>
        <end position="322"/>
    </location>
</feature>
<feature type="transmembrane region" description="Helical" evidence="3">
    <location>
        <begin position="323"/>
        <end position="345"/>
    </location>
</feature>
<feature type="topological domain" description="Periplasmic" evidence="2">
    <location>
        <begin position="346"/>
        <end position="378"/>
    </location>
</feature>
<feature type="transmembrane region" description="Helical" evidence="3">
    <location>
        <begin position="379"/>
        <end position="401"/>
    </location>
</feature>
<feature type="topological domain" description="Cytoplasmic" evidence="2">
    <location>
        <begin position="402"/>
        <end position="434"/>
    </location>
</feature>
<feature type="transmembrane region" description="Helical" evidence="3">
    <location>
        <begin position="435"/>
        <end position="457"/>
    </location>
</feature>
<feature type="topological domain" description="Periplasmic" evidence="2">
    <location>
        <begin position="458"/>
        <end position="492"/>
    </location>
</feature>
<feature type="transmembrane region" description="Helical" evidence="3">
    <location>
        <begin position="493"/>
        <end position="515"/>
    </location>
</feature>
<feature type="topological domain" description="Cytoplasmic" evidence="2">
    <location>
        <begin position="516"/>
        <end position="523"/>
    </location>
</feature>
<feature type="domain" description="ABC transmembrane type-1" evidence="3">
    <location>
        <begin position="290"/>
        <end position="514"/>
    </location>
</feature>
<evidence type="ECO:0000250" key="1">
    <source>
        <dbReference type="UniProtKB" id="P02916"/>
    </source>
</evidence>
<evidence type="ECO:0000255" key="2"/>
<evidence type="ECO:0000255" key="3">
    <source>
        <dbReference type="PROSITE-ProRule" id="PRU00441"/>
    </source>
</evidence>
<evidence type="ECO:0000305" key="4"/>
<dbReference type="EMBL" id="AE016796">
    <property type="protein sequence ID" value="AAO08448.1"/>
    <property type="molecule type" value="Genomic_DNA"/>
</dbReference>
<dbReference type="RefSeq" id="WP_011082432.1">
    <property type="nucleotide sequence ID" value="NC_004460.2"/>
</dbReference>
<dbReference type="SMR" id="Q8D3U8"/>
<dbReference type="KEGG" id="vvu:VV2_1586"/>
<dbReference type="HOGENOM" id="CLU_016047_20_0_6"/>
<dbReference type="Proteomes" id="UP000002275">
    <property type="component" value="Chromosome 2"/>
</dbReference>
<dbReference type="GO" id="GO:1990060">
    <property type="term" value="C:maltose transport complex"/>
    <property type="evidence" value="ECO:0007669"/>
    <property type="project" value="TreeGrafter"/>
</dbReference>
<dbReference type="GO" id="GO:0015423">
    <property type="term" value="F:ABC-type maltose transporter activity"/>
    <property type="evidence" value="ECO:0007669"/>
    <property type="project" value="TreeGrafter"/>
</dbReference>
<dbReference type="GO" id="GO:0042956">
    <property type="term" value="P:maltodextrin transmembrane transport"/>
    <property type="evidence" value="ECO:0007669"/>
    <property type="project" value="TreeGrafter"/>
</dbReference>
<dbReference type="CDD" id="cd06261">
    <property type="entry name" value="TM_PBP2"/>
    <property type="match status" value="1"/>
</dbReference>
<dbReference type="FunFam" id="1.10.3720.10:FF:000030">
    <property type="entry name" value="Maltose ABC transporter permease MalF"/>
    <property type="match status" value="1"/>
</dbReference>
<dbReference type="Gene3D" id="2.40.430.10">
    <property type="entry name" value="D-maltodextrin-binding protein, MBP"/>
    <property type="match status" value="1"/>
</dbReference>
<dbReference type="Gene3D" id="1.20.58.370">
    <property type="entry name" value="MalF N-terminal region-like"/>
    <property type="match status" value="1"/>
</dbReference>
<dbReference type="Gene3D" id="3.10.650.10">
    <property type="entry name" value="MalF N-terminal region-like"/>
    <property type="match status" value="1"/>
</dbReference>
<dbReference type="Gene3D" id="1.10.3720.10">
    <property type="entry name" value="MetI-like"/>
    <property type="match status" value="1"/>
</dbReference>
<dbReference type="InterPro" id="IPR035277">
    <property type="entry name" value="MalF_N"/>
</dbReference>
<dbReference type="InterPro" id="IPR048464">
    <property type="entry name" value="MalF_N_TM"/>
</dbReference>
<dbReference type="InterPro" id="IPR029345">
    <property type="entry name" value="MalF_P2"/>
</dbReference>
<dbReference type="InterPro" id="IPR047103">
    <property type="entry name" value="MalF_P2_sf"/>
</dbReference>
<dbReference type="InterPro" id="IPR000515">
    <property type="entry name" value="MetI-like"/>
</dbReference>
<dbReference type="InterPro" id="IPR035906">
    <property type="entry name" value="MetI-like_sf"/>
</dbReference>
<dbReference type="NCBIfam" id="NF008232">
    <property type="entry name" value="PRK10999.1"/>
    <property type="match status" value="1"/>
</dbReference>
<dbReference type="PANTHER" id="PTHR47314">
    <property type="entry name" value="MALTOSE/MALTODEXTRIN TRANSPORT SYSTEM PERMEASE PROTEIN MALF"/>
    <property type="match status" value="1"/>
</dbReference>
<dbReference type="PANTHER" id="PTHR47314:SF1">
    <property type="entry name" value="MALTOSE_MALTODEXTRIN TRANSPORT SYSTEM PERMEASE PROTEIN MALF"/>
    <property type="match status" value="1"/>
</dbReference>
<dbReference type="Pfam" id="PF00528">
    <property type="entry name" value="BPD_transp_1"/>
    <property type="match status" value="1"/>
</dbReference>
<dbReference type="Pfam" id="PF20872">
    <property type="entry name" value="MalF_N_TM"/>
    <property type="match status" value="1"/>
</dbReference>
<dbReference type="Pfam" id="PF14785">
    <property type="entry name" value="MalF_P2"/>
    <property type="match status" value="1"/>
</dbReference>
<dbReference type="SUPFAM" id="SSF160964">
    <property type="entry name" value="MalF N-terminal region-like"/>
    <property type="match status" value="1"/>
</dbReference>
<dbReference type="SUPFAM" id="SSF161098">
    <property type="entry name" value="MetI-like"/>
    <property type="match status" value="1"/>
</dbReference>
<dbReference type="PROSITE" id="PS50928">
    <property type="entry name" value="ABC_TM1"/>
    <property type="match status" value="1"/>
</dbReference>
<reference key="1">
    <citation type="submission" date="2002-12" db="EMBL/GenBank/DDBJ databases">
        <title>Complete genome sequence of Vibrio vulnificus CMCP6.</title>
        <authorList>
            <person name="Rhee J.H."/>
            <person name="Kim S.Y."/>
            <person name="Chung S.S."/>
            <person name="Kim J.J."/>
            <person name="Moon Y.H."/>
            <person name="Jeong H."/>
            <person name="Choy H.E."/>
        </authorList>
    </citation>
    <scope>NUCLEOTIDE SEQUENCE [LARGE SCALE GENOMIC DNA]</scope>
    <source>
        <strain>CMCP6</strain>
    </source>
</reference>
<gene>
    <name type="primary">malF</name>
    <name type="ordered locus">VV2_1586</name>
</gene>
<organism>
    <name type="scientific">Vibrio vulnificus (strain CMCP6)</name>
    <dbReference type="NCBI Taxonomy" id="216895"/>
    <lineage>
        <taxon>Bacteria</taxon>
        <taxon>Pseudomonadati</taxon>
        <taxon>Pseudomonadota</taxon>
        <taxon>Gammaproteobacteria</taxon>
        <taxon>Vibrionales</taxon>
        <taxon>Vibrionaceae</taxon>
        <taxon>Vibrio</taxon>
    </lineage>
</organism>